<feature type="chain" id="PRO_1000121907" description="Glutamate-1-semialdehyde 2,1-aminomutase">
    <location>
        <begin position="1"/>
        <end position="431"/>
    </location>
</feature>
<feature type="modified residue" description="N6-(pyridoxal phosphate)lysine" evidence="1">
    <location>
        <position position="269"/>
    </location>
</feature>
<accession>B4S3Q6</accession>
<proteinExistence type="inferred from homology"/>
<name>GSA_PROA2</name>
<evidence type="ECO:0000255" key="1">
    <source>
        <dbReference type="HAMAP-Rule" id="MF_00375"/>
    </source>
</evidence>
<comment type="catalytic activity">
    <reaction evidence="1">
        <text>(S)-4-amino-5-oxopentanoate = 5-aminolevulinate</text>
        <dbReference type="Rhea" id="RHEA:14265"/>
        <dbReference type="ChEBI" id="CHEBI:57501"/>
        <dbReference type="ChEBI" id="CHEBI:356416"/>
        <dbReference type="EC" id="5.4.3.8"/>
    </reaction>
</comment>
<comment type="cofactor">
    <cofactor evidence="1">
        <name>pyridoxal 5'-phosphate</name>
        <dbReference type="ChEBI" id="CHEBI:597326"/>
    </cofactor>
</comment>
<comment type="pathway">
    <text evidence="1">Porphyrin-containing compound metabolism; protoporphyrin-IX biosynthesis; 5-aminolevulinate from L-glutamyl-tRNA(Glu): step 2/2.</text>
</comment>
<comment type="pathway">
    <text evidence="1">Porphyrin-containing compound metabolism; chlorophyll biosynthesis.</text>
</comment>
<comment type="subunit">
    <text evidence="1">Homodimer.</text>
</comment>
<comment type="subcellular location">
    <subcellularLocation>
        <location evidence="1">Cytoplasm</location>
    </subcellularLocation>
</comment>
<comment type="similarity">
    <text evidence="1">Belongs to the class-III pyridoxal-phosphate-dependent aminotransferase family. HemL subfamily.</text>
</comment>
<reference key="1">
    <citation type="submission" date="2008-06" db="EMBL/GenBank/DDBJ databases">
        <title>Complete sequence of chromosome of Prosthecochloris aestuarii DSM 271.</title>
        <authorList>
            <consortium name="US DOE Joint Genome Institute"/>
            <person name="Lucas S."/>
            <person name="Copeland A."/>
            <person name="Lapidus A."/>
            <person name="Glavina del Rio T."/>
            <person name="Dalin E."/>
            <person name="Tice H."/>
            <person name="Bruce D."/>
            <person name="Goodwin L."/>
            <person name="Pitluck S."/>
            <person name="Schmutz J."/>
            <person name="Larimer F."/>
            <person name="Land M."/>
            <person name="Hauser L."/>
            <person name="Kyrpides N."/>
            <person name="Anderson I."/>
            <person name="Liu Z."/>
            <person name="Li T."/>
            <person name="Zhao F."/>
            <person name="Overmann J."/>
            <person name="Bryant D.A."/>
            <person name="Richardson P."/>
        </authorList>
    </citation>
    <scope>NUCLEOTIDE SEQUENCE [LARGE SCALE GENOMIC DNA]</scope>
    <source>
        <strain>DSM 271 / SK 413</strain>
    </source>
</reference>
<protein>
    <recommendedName>
        <fullName evidence="1">Glutamate-1-semialdehyde 2,1-aminomutase</fullName>
        <shortName evidence="1">GSA</shortName>
        <ecNumber evidence="1">5.4.3.8</ecNumber>
    </recommendedName>
    <alternativeName>
        <fullName evidence="1">Glutamate-1-semialdehyde aminotransferase</fullName>
        <shortName evidence="1">GSA-AT</shortName>
    </alternativeName>
</protein>
<sequence length="431" mass="46492">MPQLTRSAELFEKAKQFIPGGVNSPVRAFKSVGGTPIYMAKGQGAYMTDVDGNTYLDYVGSWGPFILGSMHPRITAALEHTLTKIGTSFGTPIEMEIEIAELLCQIVPSIEMVRMVNSGTEATMSAVRLARGYTSRDKIIKFEGCYHGHGDSFLIKAGSGALTLGAPDSPGVTKGTANDTLNAKYNDIESVRLLVNENKGNIAAIIIEPVAGNTGVIPAKPGFLQALRDLCTEEGIVLIFDEVMCGFRVALGGAQERYGVTPDLTTMGKIIGGGLPVGAFGGKREIMERIAPLGDVYQAGTLSGNPLALTAGLETLKILRDENPYPELERKAAFLEEGFRNNMNKLGLNYVQNRVGSMACLFFTETPVTDYDTAVTADLKKYGTYYHAMLDQGIYLAPSQFEAMFTSAVMTDEDLEKTVKANYVALQATQK</sequence>
<dbReference type="EC" id="5.4.3.8" evidence="1"/>
<dbReference type="EMBL" id="CP001108">
    <property type="protein sequence ID" value="ACF45252.1"/>
    <property type="molecule type" value="Genomic_DNA"/>
</dbReference>
<dbReference type="RefSeq" id="WP_012504789.1">
    <property type="nucleotide sequence ID" value="NC_011059.1"/>
</dbReference>
<dbReference type="SMR" id="B4S3Q6"/>
<dbReference type="STRING" id="290512.Paes_0193"/>
<dbReference type="KEGG" id="paa:Paes_0193"/>
<dbReference type="eggNOG" id="COG0001">
    <property type="taxonomic scope" value="Bacteria"/>
</dbReference>
<dbReference type="HOGENOM" id="CLU_016922_1_5_10"/>
<dbReference type="UniPathway" id="UPA00251">
    <property type="reaction ID" value="UER00317"/>
</dbReference>
<dbReference type="UniPathway" id="UPA00668"/>
<dbReference type="Proteomes" id="UP000002725">
    <property type="component" value="Chromosome"/>
</dbReference>
<dbReference type="GO" id="GO:0005737">
    <property type="term" value="C:cytoplasm"/>
    <property type="evidence" value="ECO:0007669"/>
    <property type="project" value="UniProtKB-SubCell"/>
</dbReference>
<dbReference type="GO" id="GO:0042286">
    <property type="term" value="F:glutamate-1-semialdehyde 2,1-aminomutase activity"/>
    <property type="evidence" value="ECO:0007669"/>
    <property type="project" value="UniProtKB-UniRule"/>
</dbReference>
<dbReference type="GO" id="GO:0030170">
    <property type="term" value="F:pyridoxal phosphate binding"/>
    <property type="evidence" value="ECO:0007669"/>
    <property type="project" value="InterPro"/>
</dbReference>
<dbReference type="GO" id="GO:0008483">
    <property type="term" value="F:transaminase activity"/>
    <property type="evidence" value="ECO:0007669"/>
    <property type="project" value="InterPro"/>
</dbReference>
<dbReference type="GO" id="GO:0015995">
    <property type="term" value="P:chlorophyll biosynthetic process"/>
    <property type="evidence" value="ECO:0007669"/>
    <property type="project" value="UniProtKB-UniRule"/>
</dbReference>
<dbReference type="GO" id="GO:0006782">
    <property type="term" value="P:protoporphyrinogen IX biosynthetic process"/>
    <property type="evidence" value="ECO:0007669"/>
    <property type="project" value="UniProtKB-UniRule"/>
</dbReference>
<dbReference type="CDD" id="cd00610">
    <property type="entry name" value="OAT_like"/>
    <property type="match status" value="1"/>
</dbReference>
<dbReference type="FunFam" id="3.40.640.10:FF:000021">
    <property type="entry name" value="Glutamate-1-semialdehyde 2,1-aminomutase"/>
    <property type="match status" value="1"/>
</dbReference>
<dbReference type="Gene3D" id="3.90.1150.10">
    <property type="entry name" value="Aspartate Aminotransferase, domain 1"/>
    <property type="match status" value="1"/>
</dbReference>
<dbReference type="Gene3D" id="3.40.640.10">
    <property type="entry name" value="Type I PLP-dependent aspartate aminotransferase-like (Major domain)"/>
    <property type="match status" value="1"/>
</dbReference>
<dbReference type="HAMAP" id="MF_00375">
    <property type="entry name" value="HemL_aminotrans_3"/>
    <property type="match status" value="1"/>
</dbReference>
<dbReference type="InterPro" id="IPR004639">
    <property type="entry name" value="4pyrrol_synth_GluAld_NH2Trfase"/>
</dbReference>
<dbReference type="InterPro" id="IPR005814">
    <property type="entry name" value="Aminotrans_3"/>
</dbReference>
<dbReference type="InterPro" id="IPR049704">
    <property type="entry name" value="Aminotrans_3_PPA_site"/>
</dbReference>
<dbReference type="InterPro" id="IPR015424">
    <property type="entry name" value="PyrdxlP-dep_Trfase"/>
</dbReference>
<dbReference type="InterPro" id="IPR015421">
    <property type="entry name" value="PyrdxlP-dep_Trfase_major"/>
</dbReference>
<dbReference type="InterPro" id="IPR015422">
    <property type="entry name" value="PyrdxlP-dep_Trfase_small"/>
</dbReference>
<dbReference type="NCBIfam" id="TIGR00713">
    <property type="entry name" value="hemL"/>
    <property type="match status" value="1"/>
</dbReference>
<dbReference type="NCBIfam" id="NF000818">
    <property type="entry name" value="PRK00062.1"/>
    <property type="match status" value="1"/>
</dbReference>
<dbReference type="PANTHER" id="PTHR43713">
    <property type="entry name" value="GLUTAMATE-1-SEMIALDEHYDE 2,1-AMINOMUTASE"/>
    <property type="match status" value="1"/>
</dbReference>
<dbReference type="PANTHER" id="PTHR43713:SF3">
    <property type="entry name" value="GLUTAMATE-1-SEMIALDEHYDE 2,1-AMINOMUTASE 1, CHLOROPLASTIC-RELATED"/>
    <property type="match status" value="1"/>
</dbReference>
<dbReference type="Pfam" id="PF00202">
    <property type="entry name" value="Aminotran_3"/>
    <property type="match status" value="1"/>
</dbReference>
<dbReference type="PIRSF" id="PIRSF000521">
    <property type="entry name" value="Transaminase_4ab_Lys_Orn"/>
    <property type="match status" value="1"/>
</dbReference>
<dbReference type="SUPFAM" id="SSF53383">
    <property type="entry name" value="PLP-dependent transferases"/>
    <property type="match status" value="1"/>
</dbReference>
<dbReference type="PROSITE" id="PS00600">
    <property type="entry name" value="AA_TRANSFER_CLASS_3"/>
    <property type="match status" value="1"/>
</dbReference>
<organism>
    <name type="scientific">Prosthecochloris aestuarii (strain DSM 271 / SK 413)</name>
    <dbReference type="NCBI Taxonomy" id="290512"/>
    <lineage>
        <taxon>Bacteria</taxon>
        <taxon>Pseudomonadati</taxon>
        <taxon>Chlorobiota</taxon>
        <taxon>Chlorobiia</taxon>
        <taxon>Chlorobiales</taxon>
        <taxon>Chlorobiaceae</taxon>
        <taxon>Prosthecochloris</taxon>
    </lineage>
</organism>
<gene>
    <name evidence="1" type="primary">hemL</name>
    <name type="ordered locus">Paes_0193</name>
</gene>
<keyword id="KW-0149">Chlorophyll biosynthesis</keyword>
<keyword id="KW-0963">Cytoplasm</keyword>
<keyword id="KW-0413">Isomerase</keyword>
<keyword id="KW-0627">Porphyrin biosynthesis</keyword>
<keyword id="KW-0663">Pyridoxal phosphate</keyword>